<proteinExistence type="inferred from homology"/>
<evidence type="ECO:0000255" key="1">
    <source>
        <dbReference type="HAMAP-Rule" id="MF_00565"/>
    </source>
</evidence>
<gene>
    <name evidence="1" type="primary">dltC</name>
    <name type="ordered locus">SAHV_0929</name>
</gene>
<dbReference type="EMBL" id="AP009324">
    <property type="protein sequence ID" value="BAF77812.1"/>
    <property type="molecule type" value="Genomic_DNA"/>
</dbReference>
<dbReference type="RefSeq" id="WP_000395692.1">
    <property type="nucleotide sequence ID" value="NZ_CTYB01000028.1"/>
</dbReference>
<dbReference type="SMR" id="A7X0D9"/>
<dbReference type="GeneID" id="98345253"/>
<dbReference type="KEGG" id="saw:SAHV_0929"/>
<dbReference type="HOGENOM" id="CLU_108696_19_0_9"/>
<dbReference type="UniPathway" id="UPA00556"/>
<dbReference type="GO" id="GO:0005737">
    <property type="term" value="C:cytoplasm"/>
    <property type="evidence" value="ECO:0007669"/>
    <property type="project" value="UniProtKB-SubCell"/>
</dbReference>
<dbReference type="GO" id="GO:0036370">
    <property type="term" value="F:D-alanyl carrier activity"/>
    <property type="evidence" value="ECO:0007669"/>
    <property type="project" value="UniProtKB-UniRule"/>
</dbReference>
<dbReference type="GO" id="GO:0071555">
    <property type="term" value="P:cell wall organization"/>
    <property type="evidence" value="ECO:0007669"/>
    <property type="project" value="UniProtKB-KW"/>
</dbReference>
<dbReference type="GO" id="GO:0070395">
    <property type="term" value="P:lipoteichoic acid biosynthetic process"/>
    <property type="evidence" value="ECO:0007669"/>
    <property type="project" value="UniProtKB-UniRule"/>
</dbReference>
<dbReference type="GO" id="GO:0141179">
    <property type="term" value="P:symbiont-mediated evasion of recognition by host antimicrobial peptide"/>
    <property type="evidence" value="ECO:0000269"/>
    <property type="project" value="SigSci"/>
</dbReference>
<dbReference type="Gene3D" id="1.10.1200.10">
    <property type="entry name" value="ACP-like"/>
    <property type="match status" value="1"/>
</dbReference>
<dbReference type="HAMAP" id="MF_00565">
    <property type="entry name" value="DltC"/>
    <property type="match status" value="1"/>
</dbReference>
<dbReference type="InterPro" id="IPR036736">
    <property type="entry name" value="ACP-like_sf"/>
</dbReference>
<dbReference type="InterPro" id="IPR003230">
    <property type="entry name" value="DltC"/>
</dbReference>
<dbReference type="InterPro" id="IPR009081">
    <property type="entry name" value="PP-bd_ACP"/>
</dbReference>
<dbReference type="NCBIfam" id="TIGR01688">
    <property type="entry name" value="dltC"/>
    <property type="match status" value="1"/>
</dbReference>
<dbReference type="NCBIfam" id="NF003464">
    <property type="entry name" value="PRK05087.1"/>
    <property type="match status" value="1"/>
</dbReference>
<dbReference type="Pfam" id="PF00550">
    <property type="entry name" value="PP-binding"/>
    <property type="match status" value="1"/>
</dbReference>
<dbReference type="SUPFAM" id="SSF47336">
    <property type="entry name" value="ACP-like"/>
    <property type="match status" value="1"/>
</dbReference>
<dbReference type="PROSITE" id="PS50075">
    <property type="entry name" value="CARRIER"/>
    <property type="match status" value="1"/>
</dbReference>
<protein>
    <recommendedName>
        <fullName evidence="1">D-alanyl carrier protein</fullName>
        <shortName evidence="1">DCP</shortName>
    </recommendedName>
    <alternativeName>
        <fullName evidence="1">D-alanine--poly(phosphoribitol) ligase subunit 2</fullName>
    </alternativeName>
</protein>
<reference key="1">
    <citation type="journal article" date="2008" name="Antimicrob. Agents Chemother.">
        <title>Mutated response regulator graR is responsible for phenotypic conversion of Staphylococcus aureus from heterogeneous vancomycin-intermediate resistance to vancomycin-intermediate resistance.</title>
        <authorList>
            <person name="Neoh H.-M."/>
            <person name="Cui L."/>
            <person name="Yuzawa H."/>
            <person name="Takeuchi F."/>
            <person name="Matsuo M."/>
            <person name="Hiramatsu K."/>
        </authorList>
    </citation>
    <scope>NUCLEOTIDE SEQUENCE [LARGE SCALE GENOMIC DNA]</scope>
    <source>
        <strain>Mu3 / ATCC 700698</strain>
    </source>
</reference>
<comment type="function">
    <text evidence="1">Carrier protein involved in the D-alanylation of lipoteichoic acid (LTA). The loading of thioester-linked D-alanine onto DltC is catalyzed by D-alanine--D-alanyl carrier protein ligase DltA. The DltC-carried D-alanyl group is further transferred to cell membrane phosphatidylglycerol (PG) by forming an ester bond, probably catalyzed by DltD. D-alanylation of LTA plays an important role in modulating the properties of the cell wall in Gram-positive bacteria, influencing the net charge of the cell wall.</text>
</comment>
<comment type="pathway">
    <text evidence="1">Cell wall biogenesis; lipoteichoic acid biosynthesis.</text>
</comment>
<comment type="subcellular location">
    <subcellularLocation>
        <location evidence="1">Cytoplasm</location>
    </subcellularLocation>
</comment>
<comment type="PTM">
    <text evidence="1">4'-phosphopantetheine is transferred from CoA to a specific serine of apo-DCP.</text>
</comment>
<comment type="similarity">
    <text evidence="1">Belongs to the DltC family.</text>
</comment>
<sequence length="78" mass="9063">MEFREQVLNLLAEVAENDIVKENPDVEIFEEGIIDSFQTVGLLLEIQNKLDIEVSIMDFDRDEWATPNKIVEALEELR</sequence>
<feature type="chain" id="PRO_1000024923" description="D-alanyl carrier protein">
    <location>
        <begin position="1"/>
        <end position="78"/>
    </location>
</feature>
<feature type="domain" description="Carrier" evidence="1">
    <location>
        <begin position="1"/>
        <end position="78"/>
    </location>
</feature>
<feature type="modified residue" description="O-(pantetheine 4'-phosphoryl)serine" evidence="1">
    <location>
        <position position="36"/>
    </location>
</feature>
<keyword id="KW-0961">Cell wall biogenesis/degradation</keyword>
<keyword id="KW-0963">Cytoplasm</keyword>
<keyword id="KW-0596">Phosphopantetheine</keyword>
<keyword id="KW-0597">Phosphoprotein</keyword>
<accession>A7X0D9</accession>
<organism>
    <name type="scientific">Staphylococcus aureus (strain Mu3 / ATCC 700698)</name>
    <dbReference type="NCBI Taxonomy" id="418127"/>
    <lineage>
        <taxon>Bacteria</taxon>
        <taxon>Bacillati</taxon>
        <taxon>Bacillota</taxon>
        <taxon>Bacilli</taxon>
        <taxon>Bacillales</taxon>
        <taxon>Staphylococcaceae</taxon>
        <taxon>Staphylococcus</taxon>
    </lineage>
</organism>
<name>DLTC_STAA1</name>